<keyword id="KW-0963">Cytoplasm</keyword>
<keyword id="KW-0378">Hydrolase</keyword>
<keyword id="KW-0452">Lithium</keyword>
<keyword id="KW-0460">Magnesium</keyword>
<keyword id="KW-0479">Metal-binding</keyword>
<keyword id="KW-1185">Reference proteome</keyword>
<proteinExistence type="evidence at transcript level"/>
<name>IMPA1_XENLA</name>
<organism>
    <name type="scientific">Xenopus laevis</name>
    <name type="common">African clawed frog</name>
    <dbReference type="NCBI Taxonomy" id="8355"/>
    <lineage>
        <taxon>Eukaryota</taxon>
        <taxon>Metazoa</taxon>
        <taxon>Chordata</taxon>
        <taxon>Craniata</taxon>
        <taxon>Vertebrata</taxon>
        <taxon>Euteleostomi</taxon>
        <taxon>Amphibia</taxon>
        <taxon>Batrachia</taxon>
        <taxon>Anura</taxon>
        <taxon>Pipoidea</taxon>
        <taxon>Pipidae</taxon>
        <taxon>Xenopodinae</taxon>
        <taxon>Xenopus</taxon>
        <taxon>Xenopus</taxon>
    </lineage>
</organism>
<feature type="chain" id="PRO_0000142518" description="Inositol monophosphatase 1">
    <location>
        <begin position="1"/>
        <end position="285"/>
    </location>
</feature>
<feature type="binding site" evidence="1">
    <location>
        <position position="73"/>
    </location>
    <ligand>
        <name>Mg(2+)</name>
        <dbReference type="ChEBI" id="CHEBI:18420"/>
        <label>1</label>
        <note>catalytic</note>
    </ligand>
</feature>
<feature type="binding site" evidence="1">
    <location>
        <position position="73"/>
    </location>
    <ligand>
        <name>substrate</name>
    </ligand>
</feature>
<feature type="binding site" evidence="1">
    <location>
        <position position="93"/>
    </location>
    <ligand>
        <name>Mg(2+)</name>
        <dbReference type="ChEBI" id="CHEBI:18420"/>
        <label>1</label>
        <note>catalytic</note>
    </ligand>
</feature>
<feature type="binding site" evidence="1">
    <location>
        <position position="93"/>
    </location>
    <ligand>
        <name>Mg(2+)</name>
        <dbReference type="ChEBI" id="CHEBI:18420"/>
        <label>2</label>
    </ligand>
</feature>
<feature type="binding site" evidence="1">
    <location>
        <begin position="95"/>
        <end position="98"/>
    </location>
    <ligand>
        <name>substrate</name>
    </ligand>
</feature>
<feature type="binding site" evidence="1">
    <location>
        <position position="95"/>
    </location>
    <ligand>
        <name>Mg(2+)</name>
        <dbReference type="ChEBI" id="CHEBI:18420"/>
        <label>1</label>
        <note>catalytic</note>
    </ligand>
</feature>
<feature type="binding site" evidence="1">
    <location>
        <position position="96"/>
    </location>
    <ligand>
        <name>Mg(2+)</name>
        <dbReference type="ChEBI" id="CHEBI:18420"/>
        <label>2</label>
    </ligand>
</feature>
<feature type="binding site" evidence="1">
    <location>
        <begin position="198"/>
        <end position="200"/>
    </location>
    <ligand>
        <name>substrate</name>
    </ligand>
</feature>
<feature type="binding site" evidence="1">
    <location>
        <position position="217"/>
    </location>
    <ligand>
        <name>substrate</name>
    </ligand>
</feature>
<feature type="binding site" evidence="1">
    <location>
        <position position="224"/>
    </location>
    <ligand>
        <name>Mg(2+)</name>
        <dbReference type="ChEBI" id="CHEBI:18420"/>
        <label>2</label>
    </ligand>
</feature>
<feature type="binding site" evidence="1">
    <location>
        <position position="224"/>
    </location>
    <ligand>
        <name>substrate</name>
    </ligand>
</feature>
<dbReference type="EC" id="3.1.3.25" evidence="1"/>
<dbReference type="EC" id="3.1.3.94" evidence="1"/>
<dbReference type="EMBL" id="X65513">
    <property type="protein sequence ID" value="CAA46486.1"/>
    <property type="molecule type" value="mRNA"/>
</dbReference>
<dbReference type="PIR" id="S24343">
    <property type="entry name" value="S24343"/>
</dbReference>
<dbReference type="RefSeq" id="NP_001095235.1">
    <property type="nucleotide sequence ID" value="NM_001101765.1"/>
</dbReference>
<dbReference type="SMR" id="P29219"/>
<dbReference type="OrthoDB" id="10254945at2759"/>
<dbReference type="UniPathway" id="UPA00823">
    <property type="reaction ID" value="UER00788"/>
</dbReference>
<dbReference type="Proteomes" id="UP000186698">
    <property type="component" value="Unplaced"/>
</dbReference>
<dbReference type="GO" id="GO:0005737">
    <property type="term" value="C:cytoplasm"/>
    <property type="evidence" value="ECO:0007669"/>
    <property type="project" value="UniProtKB-SubCell"/>
</dbReference>
<dbReference type="GO" id="GO:0103026">
    <property type="term" value="F:fructose-1-phosphatase activity"/>
    <property type="evidence" value="ECO:0007669"/>
    <property type="project" value="RHEA"/>
</dbReference>
<dbReference type="GO" id="GO:0008877">
    <property type="term" value="F:glucose-1-phosphatase activity"/>
    <property type="evidence" value="ECO:0007669"/>
    <property type="project" value="RHEA"/>
</dbReference>
<dbReference type="GO" id="GO:0004346">
    <property type="term" value="F:glucose-6-phosphatase activity"/>
    <property type="evidence" value="ECO:0007669"/>
    <property type="project" value="RHEA"/>
</dbReference>
<dbReference type="GO" id="GO:0047954">
    <property type="term" value="F:glycerol-2-phosphatase activity"/>
    <property type="evidence" value="ECO:0007669"/>
    <property type="project" value="RHEA"/>
</dbReference>
<dbReference type="GO" id="GO:0008934">
    <property type="term" value="F:inositol monophosphate 1-phosphatase activity"/>
    <property type="evidence" value="ECO:0000318"/>
    <property type="project" value="GO_Central"/>
</dbReference>
<dbReference type="GO" id="GO:0052832">
    <property type="term" value="F:inositol monophosphate 3-phosphatase activity"/>
    <property type="evidence" value="ECO:0007669"/>
    <property type="project" value="RHEA"/>
</dbReference>
<dbReference type="GO" id="GO:0052833">
    <property type="term" value="F:inositol monophosphate 4-phosphatase activity"/>
    <property type="evidence" value="ECO:0007669"/>
    <property type="project" value="RHEA"/>
</dbReference>
<dbReference type="GO" id="GO:0052834">
    <property type="term" value="F:inositol monophosphate phosphatase activity"/>
    <property type="evidence" value="ECO:0000250"/>
    <property type="project" value="UniProtKB"/>
</dbReference>
<dbReference type="GO" id="GO:0031403">
    <property type="term" value="F:lithium ion binding"/>
    <property type="evidence" value="ECO:0000250"/>
    <property type="project" value="UniProtKB"/>
</dbReference>
<dbReference type="GO" id="GO:0000287">
    <property type="term" value="F:magnesium ion binding"/>
    <property type="evidence" value="ECO:0000250"/>
    <property type="project" value="UniProtKB"/>
</dbReference>
<dbReference type="GO" id="GO:0030145">
    <property type="term" value="F:manganese ion binding"/>
    <property type="evidence" value="ECO:0000250"/>
    <property type="project" value="UniProtKB"/>
</dbReference>
<dbReference type="GO" id="GO:0006021">
    <property type="term" value="P:inositol biosynthetic process"/>
    <property type="evidence" value="ECO:0007669"/>
    <property type="project" value="UniProtKB-UniPathway"/>
</dbReference>
<dbReference type="GO" id="GO:0006020">
    <property type="term" value="P:inositol metabolic process"/>
    <property type="evidence" value="ECO:0000318"/>
    <property type="project" value="GO_Central"/>
</dbReference>
<dbReference type="GO" id="GO:0046854">
    <property type="term" value="P:phosphatidylinositol phosphate biosynthetic process"/>
    <property type="evidence" value="ECO:0007669"/>
    <property type="project" value="InterPro"/>
</dbReference>
<dbReference type="GO" id="GO:0007165">
    <property type="term" value="P:signal transduction"/>
    <property type="evidence" value="ECO:0000318"/>
    <property type="project" value="GO_Central"/>
</dbReference>
<dbReference type="CDD" id="cd01639">
    <property type="entry name" value="IMPase"/>
    <property type="match status" value="1"/>
</dbReference>
<dbReference type="FunFam" id="3.30.540.10:FF:000004">
    <property type="entry name" value="Inositol-1-monophosphatase"/>
    <property type="match status" value="1"/>
</dbReference>
<dbReference type="FunFam" id="3.40.190.80:FF:000002">
    <property type="entry name" value="Inositol-1-monophosphatase"/>
    <property type="match status" value="1"/>
</dbReference>
<dbReference type="Gene3D" id="3.40.190.80">
    <property type="match status" value="1"/>
</dbReference>
<dbReference type="Gene3D" id="3.30.540.10">
    <property type="entry name" value="Fructose-1,6-Bisphosphatase, subunit A, domain 1"/>
    <property type="match status" value="1"/>
</dbReference>
<dbReference type="InterPro" id="IPR033942">
    <property type="entry name" value="IMPase"/>
</dbReference>
<dbReference type="InterPro" id="IPR020583">
    <property type="entry name" value="Inositol_monoP_metal-BS"/>
</dbReference>
<dbReference type="InterPro" id="IPR020552">
    <property type="entry name" value="Inositol_monoPase_Li-sen"/>
</dbReference>
<dbReference type="InterPro" id="IPR000760">
    <property type="entry name" value="Inositol_monophosphatase-like"/>
</dbReference>
<dbReference type="InterPro" id="IPR020550">
    <property type="entry name" value="Inositol_monophosphatase_CS"/>
</dbReference>
<dbReference type="PANTHER" id="PTHR20854">
    <property type="entry name" value="INOSITOL MONOPHOSPHATASE"/>
    <property type="match status" value="1"/>
</dbReference>
<dbReference type="PANTHER" id="PTHR20854:SF26">
    <property type="entry name" value="INOSITOL MONOPHOSPHATASE 1"/>
    <property type="match status" value="1"/>
</dbReference>
<dbReference type="Pfam" id="PF00459">
    <property type="entry name" value="Inositol_P"/>
    <property type="match status" value="1"/>
</dbReference>
<dbReference type="PRINTS" id="PR00377">
    <property type="entry name" value="IMPHPHTASES"/>
</dbReference>
<dbReference type="PRINTS" id="PR00378">
    <property type="entry name" value="LIIMPHPHTASE"/>
</dbReference>
<dbReference type="SUPFAM" id="SSF56655">
    <property type="entry name" value="Carbohydrate phosphatase"/>
    <property type="match status" value="1"/>
</dbReference>
<dbReference type="PROSITE" id="PS00629">
    <property type="entry name" value="IMP_1"/>
    <property type="match status" value="1"/>
</dbReference>
<dbReference type="PROSITE" id="PS00630">
    <property type="entry name" value="IMP_2"/>
    <property type="match status" value="1"/>
</dbReference>
<evidence type="ECO:0000250" key="1">
    <source>
        <dbReference type="UniProtKB" id="P29218"/>
    </source>
</evidence>
<evidence type="ECO:0000305" key="2"/>
<reference key="1">
    <citation type="journal article" date="1992" name="Biochem. J.">
        <title>Inositol monophosphatase is a highly conserved enzyme having localized structural similarity to both glycerol 3-phosphate dehydrogenase and haemoglobin.</title>
        <authorList>
            <person name="Wreggett K.A."/>
        </authorList>
    </citation>
    <scope>NUCLEOTIDE SEQUENCE [MRNA]</scope>
    <source>
        <tissue>Oocyte</tissue>
    </source>
</reference>
<comment type="function">
    <text evidence="1">Phosphatase involved in the dephosphorylation of myo-inositol monophosphate to generate myo-inositol. Is also able to dephosphorylate scyllo-inositol-phosphate, myo-inositol 1,4-diphosphate, scyllo-inositol-1,3-diphosphate and scyllo-inositol-1,4-diphosphate. Also dephosphorylates in vitro other sugar-phosphates including D-galactose-1-phosphate, glucose-1-phosphate, glucose-6-phosphate, fructose-1-phosphate, beta-glycerophosphate and 2'-AMP. Responsible for the provision of inositol required for synthesis of phosphatidylinositol and polyphosphoinositides, and involved in maintaining normal brain function. Has been implicated as the pharmacological target for lithium Li(+) action in brain.</text>
</comment>
<comment type="catalytic activity">
    <reaction evidence="1">
        <text>a myo-inositol phosphate + H2O = myo-inositol + phosphate</text>
        <dbReference type="Rhea" id="RHEA:24056"/>
        <dbReference type="ChEBI" id="CHEBI:15377"/>
        <dbReference type="ChEBI" id="CHEBI:17268"/>
        <dbReference type="ChEBI" id="CHEBI:43474"/>
        <dbReference type="ChEBI" id="CHEBI:84139"/>
        <dbReference type="EC" id="3.1.3.25"/>
    </reaction>
    <physiologicalReaction direction="left-to-right" evidence="1">
        <dbReference type="Rhea" id="RHEA:24057"/>
    </physiologicalReaction>
</comment>
<comment type="catalytic activity">
    <reaction evidence="1">
        <text>1D-myo-inositol 1-phosphate + H2O = myo-inositol + phosphate</text>
        <dbReference type="Rhea" id="RHEA:27670"/>
        <dbReference type="ChEBI" id="CHEBI:15377"/>
        <dbReference type="ChEBI" id="CHEBI:17268"/>
        <dbReference type="ChEBI" id="CHEBI:43474"/>
        <dbReference type="ChEBI" id="CHEBI:58433"/>
        <dbReference type="EC" id="3.1.3.25"/>
    </reaction>
    <physiologicalReaction direction="left-to-right" evidence="1">
        <dbReference type="Rhea" id="RHEA:27671"/>
    </physiologicalReaction>
</comment>
<comment type="catalytic activity">
    <reaction evidence="1">
        <text>1D-myo-inositol 2-phosphate + H2O = myo-inositol + phosphate</text>
        <dbReference type="Rhea" id="RHEA:44152"/>
        <dbReference type="ChEBI" id="CHEBI:15377"/>
        <dbReference type="ChEBI" id="CHEBI:17268"/>
        <dbReference type="ChEBI" id="CHEBI:43474"/>
        <dbReference type="ChEBI" id="CHEBI:84142"/>
        <dbReference type="EC" id="3.1.3.25"/>
    </reaction>
    <physiologicalReaction direction="left-to-right" evidence="1">
        <dbReference type="Rhea" id="RHEA:44153"/>
    </physiologicalReaction>
</comment>
<comment type="catalytic activity">
    <reaction evidence="1">
        <text>1D-myo-inositol 3-phosphate + H2O = myo-inositol + phosphate</text>
        <dbReference type="Rhea" id="RHEA:30739"/>
        <dbReference type="ChEBI" id="CHEBI:15377"/>
        <dbReference type="ChEBI" id="CHEBI:17268"/>
        <dbReference type="ChEBI" id="CHEBI:43474"/>
        <dbReference type="ChEBI" id="CHEBI:58401"/>
        <dbReference type="EC" id="3.1.3.25"/>
    </reaction>
    <physiologicalReaction direction="left-to-right" evidence="1">
        <dbReference type="Rhea" id="RHEA:30740"/>
    </physiologicalReaction>
</comment>
<comment type="catalytic activity">
    <reaction evidence="1">
        <text>1D-myo-inositol 4-phosphate + H2O = myo-inositol + phosphate</text>
        <dbReference type="Rhea" id="RHEA:30735"/>
        <dbReference type="ChEBI" id="CHEBI:15377"/>
        <dbReference type="ChEBI" id="CHEBI:17268"/>
        <dbReference type="ChEBI" id="CHEBI:43474"/>
        <dbReference type="ChEBI" id="CHEBI:58469"/>
        <dbReference type="EC" id="3.1.3.25"/>
    </reaction>
    <physiologicalReaction direction="left-to-right" evidence="1">
        <dbReference type="Rhea" id="RHEA:30736"/>
    </physiologicalReaction>
</comment>
<comment type="catalytic activity">
    <reaction evidence="1">
        <text>1D-myo-inositol 5-phosphate + H2O = myo-inositol + phosphate</text>
        <dbReference type="Rhea" id="RHEA:44156"/>
        <dbReference type="ChEBI" id="CHEBI:15377"/>
        <dbReference type="ChEBI" id="CHEBI:17268"/>
        <dbReference type="ChEBI" id="CHEBI:43474"/>
        <dbReference type="ChEBI" id="CHEBI:84141"/>
        <dbReference type="EC" id="3.1.3.25"/>
    </reaction>
    <physiologicalReaction direction="left-to-right" evidence="1">
        <dbReference type="Rhea" id="RHEA:44157"/>
    </physiologicalReaction>
</comment>
<comment type="catalytic activity">
    <reaction evidence="1">
        <text>1D-myo-inositol 6-phosphate + H2O = myo-inositol + phosphate</text>
        <dbReference type="Rhea" id="RHEA:44160"/>
        <dbReference type="ChEBI" id="CHEBI:15377"/>
        <dbReference type="ChEBI" id="CHEBI:17268"/>
        <dbReference type="ChEBI" id="CHEBI:43474"/>
        <dbReference type="ChEBI" id="CHEBI:64841"/>
        <dbReference type="EC" id="3.1.3.25"/>
    </reaction>
    <physiologicalReaction direction="left-to-right" evidence="1">
        <dbReference type="Rhea" id="RHEA:44161"/>
    </physiologicalReaction>
</comment>
<comment type="catalytic activity">
    <reaction evidence="1">
        <text>scyllo-inositol 1-phosphate + H2O = scyllo-inositol + phosphate</text>
        <dbReference type="Rhea" id="RHEA:82131"/>
        <dbReference type="ChEBI" id="CHEBI:10642"/>
        <dbReference type="ChEBI" id="CHEBI:15377"/>
        <dbReference type="ChEBI" id="CHEBI:43474"/>
        <dbReference type="ChEBI" id="CHEBI:232087"/>
    </reaction>
    <physiologicalReaction direction="left-to-right" evidence="1">
        <dbReference type="Rhea" id="RHEA:82132"/>
    </physiologicalReaction>
</comment>
<comment type="catalytic activity">
    <reaction evidence="1">
        <text>alpha-D-galactose 1-phosphate + H2O = D-galactose + phosphate</text>
        <dbReference type="Rhea" id="RHEA:29315"/>
        <dbReference type="ChEBI" id="CHEBI:4139"/>
        <dbReference type="ChEBI" id="CHEBI:15377"/>
        <dbReference type="ChEBI" id="CHEBI:43474"/>
        <dbReference type="ChEBI" id="CHEBI:58336"/>
        <dbReference type="EC" id="3.1.3.94"/>
    </reaction>
    <physiologicalReaction direction="left-to-right" evidence="1">
        <dbReference type="Rhea" id="RHEA:29316"/>
    </physiologicalReaction>
</comment>
<comment type="catalytic activity">
    <reaction evidence="1">
        <text>alpha-D-glucose 1-phosphate + H2O = D-glucose + phosphate</text>
        <dbReference type="Rhea" id="RHEA:19933"/>
        <dbReference type="ChEBI" id="CHEBI:4167"/>
        <dbReference type="ChEBI" id="CHEBI:15377"/>
        <dbReference type="ChEBI" id="CHEBI:43474"/>
        <dbReference type="ChEBI" id="CHEBI:58601"/>
    </reaction>
    <physiologicalReaction direction="left-to-right" evidence="1">
        <dbReference type="Rhea" id="RHEA:19934"/>
    </physiologicalReaction>
</comment>
<comment type="catalytic activity">
    <reaction evidence="1">
        <text>D-glucose 6-phosphate + H2O = D-glucose + phosphate</text>
        <dbReference type="Rhea" id="RHEA:16689"/>
        <dbReference type="ChEBI" id="CHEBI:4167"/>
        <dbReference type="ChEBI" id="CHEBI:15377"/>
        <dbReference type="ChEBI" id="CHEBI:43474"/>
        <dbReference type="ChEBI" id="CHEBI:61548"/>
    </reaction>
    <physiologicalReaction direction="left-to-right" evidence="1">
        <dbReference type="Rhea" id="RHEA:16690"/>
    </physiologicalReaction>
</comment>
<comment type="catalytic activity">
    <reaction evidence="1">
        <text>beta-D-fructose 1-phosphate + H2O = D-fructose + phosphate</text>
        <dbReference type="Rhea" id="RHEA:35603"/>
        <dbReference type="ChEBI" id="CHEBI:15377"/>
        <dbReference type="ChEBI" id="CHEBI:37721"/>
        <dbReference type="ChEBI" id="CHEBI:43474"/>
        <dbReference type="ChEBI" id="CHEBI:138881"/>
    </reaction>
    <physiologicalReaction direction="left-to-right" evidence="1">
        <dbReference type="Rhea" id="RHEA:35604"/>
    </physiologicalReaction>
</comment>
<comment type="catalytic activity">
    <reaction evidence="1">
        <text>glycerol 2-phosphate + H2O = glycerol + phosphate</text>
        <dbReference type="Rhea" id="RHEA:13105"/>
        <dbReference type="ChEBI" id="CHEBI:15377"/>
        <dbReference type="ChEBI" id="CHEBI:17754"/>
        <dbReference type="ChEBI" id="CHEBI:43474"/>
        <dbReference type="ChEBI" id="CHEBI:58083"/>
    </reaction>
    <physiologicalReaction direction="left-to-right" evidence="1">
        <dbReference type="Rhea" id="RHEA:13106"/>
    </physiologicalReaction>
</comment>
<comment type="catalytic activity">
    <reaction evidence="1">
        <text>adenosine 2'-phosphate + H2O = adenosine + phosphate</text>
        <dbReference type="Rhea" id="RHEA:37343"/>
        <dbReference type="ChEBI" id="CHEBI:15377"/>
        <dbReference type="ChEBI" id="CHEBI:16335"/>
        <dbReference type="ChEBI" id="CHEBI:43474"/>
        <dbReference type="ChEBI" id="CHEBI:77740"/>
    </reaction>
    <physiologicalReaction direction="left-to-right" evidence="1">
        <dbReference type="Rhea" id="RHEA:37344"/>
    </physiologicalReaction>
</comment>
<comment type="cofactor">
    <cofactor evidence="1">
        <name>Mg(2+)</name>
        <dbReference type="ChEBI" id="CHEBI:18420"/>
    </cofactor>
</comment>
<comment type="activity regulation">
    <text evidence="1">Inhibited by Li(+), Ca(2+) and Mn(2+), but also by Mg(2+) at concentrations above 3 mM.</text>
</comment>
<comment type="pathway">
    <text>Polyol metabolism; myo-inositol biosynthesis; myo-inositol from D-glucose 6-phosphate: step 2/2.</text>
</comment>
<comment type="subunit">
    <text evidence="1">Homodimer.</text>
</comment>
<comment type="subcellular location">
    <subcellularLocation>
        <location evidence="1">Cytoplasm</location>
    </subcellularLocation>
</comment>
<comment type="similarity">
    <text evidence="2">Belongs to the inositol monophosphatase superfamily.</text>
</comment>
<sequence>MEDRWQECMDFLAVSIARKAGSVVCAALKEDVSIMVKTSLAPADLVTATDQKVEEMIISSIKEKYPSHSFIGEESVAAGAGSTLTDNPTWIIDPIDGTTNFVHRFPFVAVSIGFAVHKQVEFGVVYSCVEDKMYTGRKGKGSFCNGQKLQVSGQKDITKSMIITELGSNRNPEFIKTVSLSNMERLLCIPIHGIRAVGTAAVNMCLVATGGADAYYEMGLHCWDMAAASVIVTEAGGTILDATGGLFDLMSCRIISASSREIAERIAKELQIIPLERDDGKSTNS</sequence>
<gene>
    <name type="primary">impa1</name>
</gene>
<protein>
    <recommendedName>
        <fullName>Inositol monophosphatase 1</fullName>
        <shortName>IMP 1</shortName>
        <shortName>IMPase 1</shortName>
        <ecNumber evidence="1">3.1.3.25</ecNumber>
    </recommendedName>
    <alternativeName>
        <fullName evidence="1">D-galactose 1-phosphate phosphatase</fullName>
        <ecNumber evidence="1">3.1.3.94</ecNumber>
    </alternativeName>
    <alternativeName>
        <fullName>Inositol-1(or 4)-monophosphatase 1</fullName>
    </alternativeName>
</protein>
<accession>P29219</accession>